<reference key="1">
    <citation type="journal article" date="2003" name="J. Bacteriol.">
        <title>Complete genome sequence of the ammonia-oxidizing bacterium and obligate chemolithoautotroph Nitrosomonas europaea.</title>
        <authorList>
            <person name="Chain P."/>
            <person name="Lamerdin J.E."/>
            <person name="Larimer F.W."/>
            <person name="Regala W."/>
            <person name="Lao V."/>
            <person name="Land M.L."/>
            <person name="Hauser L."/>
            <person name="Hooper A.B."/>
            <person name="Klotz M.G."/>
            <person name="Norton J."/>
            <person name="Sayavedra-Soto L.A."/>
            <person name="Arciero D.M."/>
            <person name="Hommes N.G."/>
            <person name="Whittaker M.M."/>
            <person name="Arp D.J."/>
        </authorList>
    </citation>
    <scope>NUCLEOTIDE SEQUENCE [LARGE SCALE GENOMIC DNA]</scope>
    <source>
        <strain>ATCC 19718 / CIP 103999 / KCTC 2705 / NBRC 14298</strain>
    </source>
</reference>
<name>RLMN_NITEU</name>
<sequence length="379" mass="41646">MINLLDFNKTELVRFCGEMGEKPYRARQLLRWVHQSGKTDFMEMSDLAKGFRHKLMECAVVQLPEIVSDHTAGDGTRKWLLSTGAGNAVEMVFIPEPSRGTLCVSSQVGCALACSFCSTGRQGFNRNLSVAEIIGQLWWANRLLEAGSHDPFPLDTTRVQTDKPETRRPVTNVVMMGMGEPLANFENLVTALDLMLSDDAYGLSRRRVTVSTSGLVPALDRLRERCPVALAVSLHAPNDALRDQLVPINKKYPIRDLLAACERYLPAAPRDFITFEYVMLKGVNDSVALARELVQLVRNVPCKLNLIPFNAFSGSGYERSGAEAIGNFRDVLMQAGIVTTVRKTRGDDIAAACGQLAGQVRDKTRRTSGCGTGQPAVAR</sequence>
<evidence type="ECO:0000255" key="1">
    <source>
        <dbReference type="HAMAP-Rule" id="MF_01849"/>
    </source>
</evidence>
<evidence type="ECO:0000255" key="2">
    <source>
        <dbReference type="PROSITE-ProRule" id="PRU01266"/>
    </source>
</evidence>
<evidence type="ECO:0000305" key="3"/>
<dbReference type="EC" id="2.1.1.192" evidence="1"/>
<dbReference type="EMBL" id="AL954747">
    <property type="protein sequence ID" value="CAD84056.1"/>
    <property type="status" value="ALT_INIT"/>
    <property type="molecule type" value="Genomic_DNA"/>
</dbReference>
<dbReference type="RefSeq" id="WP_041356300.1">
    <property type="nucleotide sequence ID" value="NC_004757.1"/>
</dbReference>
<dbReference type="SMR" id="Q82XV4"/>
<dbReference type="STRING" id="228410.NE0145"/>
<dbReference type="GeneID" id="87103356"/>
<dbReference type="KEGG" id="neu:NE0145"/>
<dbReference type="eggNOG" id="COG0820">
    <property type="taxonomic scope" value="Bacteria"/>
</dbReference>
<dbReference type="HOGENOM" id="CLU_029101_0_0_4"/>
<dbReference type="OrthoDB" id="9793973at2"/>
<dbReference type="Proteomes" id="UP000001416">
    <property type="component" value="Chromosome"/>
</dbReference>
<dbReference type="GO" id="GO:0005737">
    <property type="term" value="C:cytoplasm"/>
    <property type="evidence" value="ECO:0007669"/>
    <property type="project" value="UniProtKB-SubCell"/>
</dbReference>
<dbReference type="GO" id="GO:0051539">
    <property type="term" value="F:4 iron, 4 sulfur cluster binding"/>
    <property type="evidence" value="ECO:0007669"/>
    <property type="project" value="UniProtKB-UniRule"/>
</dbReference>
<dbReference type="GO" id="GO:0046872">
    <property type="term" value="F:metal ion binding"/>
    <property type="evidence" value="ECO:0007669"/>
    <property type="project" value="UniProtKB-KW"/>
</dbReference>
<dbReference type="GO" id="GO:0070040">
    <property type="term" value="F:rRNA (adenine(2503)-C2-)-methyltransferase activity"/>
    <property type="evidence" value="ECO:0007669"/>
    <property type="project" value="UniProtKB-UniRule"/>
</dbReference>
<dbReference type="GO" id="GO:0019843">
    <property type="term" value="F:rRNA binding"/>
    <property type="evidence" value="ECO:0007669"/>
    <property type="project" value="UniProtKB-UniRule"/>
</dbReference>
<dbReference type="GO" id="GO:0002935">
    <property type="term" value="F:tRNA (adenine(37)-C2)-methyltransferase activity"/>
    <property type="evidence" value="ECO:0007669"/>
    <property type="project" value="UniProtKB-UniRule"/>
</dbReference>
<dbReference type="GO" id="GO:0000049">
    <property type="term" value="F:tRNA binding"/>
    <property type="evidence" value="ECO:0007669"/>
    <property type="project" value="UniProtKB-UniRule"/>
</dbReference>
<dbReference type="GO" id="GO:0070475">
    <property type="term" value="P:rRNA base methylation"/>
    <property type="evidence" value="ECO:0007669"/>
    <property type="project" value="UniProtKB-UniRule"/>
</dbReference>
<dbReference type="GO" id="GO:0030488">
    <property type="term" value="P:tRNA methylation"/>
    <property type="evidence" value="ECO:0007669"/>
    <property type="project" value="UniProtKB-UniRule"/>
</dbReference>
<dbReference type="CDD" id="cd01335">
    <property type="entry name" value="Radical_SAM"/>
    <property type="match status" value="1"/>
</dbReference>
<dbReference type="FunFam" id="1.10.150.530:FF:000003">
    <property type="entry name" value="Dual-specificity RNA methyltransferase RlmN"/>
    <property type="match status" value="1"/>
</dbReference>
<dbReference type="FunFam" id="3.20.20.70:FF:000008">
    <property type="entry name" value="Dual-specificity RNA methyltransferase RlmN"/>
    <property type="match status" value="1"/>
</dbReference>
<dbReference type="Gene3D" id="1.10.150.530">
    <property type="match status" value="1"/>
</dbReference>
<dbReference type="Gene3D" id="3.20.20.70">
    <property type="entry name" value="Aldolase class I"/>
    <property type="match status" value="1"/>
</dbReference>
<dbReference type="HAMAP" id="MF_01849">
    <property type="entry name" value="RNA_methyltr_RlmN"/>
    <property type="match status" value="1"/>
</dbReference>
<dbReference type="InterPro" id="IPR013785">
    <property type="entry name" value="Aldolase_TIM"/>
</dbReference>
<dbReference type="InterPro" id="IPR040072">
    <property type="entry name" value="Methyltransferase_A"/>
</dbReference>
<dbReference type="InterPro" id="IPR048641">
    <property type="entry name" value="RlmN_N"/>
</dbReference>
<dbReference type="InterPro" id="IPR027492">
    <property type="entry name" value="RNA_MTrfase_RlmN"/>
</dbReference>
<dbReference type="InterPro" id="IPR004383">
    <property type="entry name" value="rRNA_lsu_MTrfase_RlmN/Cfr"/>
</dbReference>
<dbReference type="InterPro" id="IPR007197">
    <property type="entry name" value="rSAM"/>
</dbReference>
<dbReference type="NCBIfam" id="TIGR00048">
    <property type="entry name" value="rRNA_mod_RlmN"/>
    <property type="match status" value="1"/>
</dbReference>
<dbReference type="PANTHER" id="PTHR30544">
    <property type="entry name" value="23S RRNA METHYLTRANSFERASE"/>
    <property type="match status" value="1"/>
</dbReference>
<dbReference type="PANTHER" id="PTHR30544:SF5">
    <property type="entry name" value="RADICAL SAM CORE DOMAIN-CONTAINING PROTEIN"/>
    <property type="match status" value="1"/>
</dbReference>
<dbReference type="Pfam" id="PF04055">
    <property type="entry name" value="Radical_SAM"/>
    <property type="match status" value="1"/>
</dbReference>
<dbReference type="Pfam" id="PF21016">
    <property type="entry name" value="RlmN_N"/>
    <property type="match status" value="1"/>
</dbReference>
<dbReference type="PIRSF" id="PIRSF006004">
    <property type="entry name" value="CHP00048"/>
    <property type="match status" value="1"/>
</dbReference>
<dbReference type="SFLD" id="SFLDF00275">
    <property type="entry name" value="adenosine_C2_methyltransferase"/>
    <property type="match status" value="1"/>
</dbReference>
<dbReference type="SFLD" id="SFLDG01062">
    <property type="entry name" value="methyltransferase_(Class_A)"/>
    <property type="match status" value="1"/>
</dbReference>
<dbReference type="SUPFAM" id="SSF102114">
    <property type="entry name" value="Radical SAM enzymes"/>
    <property type="match status" value="1"/>
</dbReference>
<dbReference type="PROSITE" id="PS51918">
    <property type="entry name" value="RADICAL_SAM"/>
    <property type="match status" value="1"/>
</dbReference>
<proteinExistence type="inferred from homology"/>
<feature type="chain" id="PRO_0000350285" description="Dual-specificity RNA methyltransferase RlmN">
    <location>
        <begin position="1"/>
        <end position="379"/>
    </location>
</feature>
<feature type="domain" description="Radical SAM core" evidence="2">
    <location>
        <begin position="96"/>
        <end position="348"/>
    </location>
</feature>
<feature type="active site" description="Proton acceptor" evidence="1">
    <location>
        <position position="90"/>
    </location>
</feature>
<feature type="active site" description="S-methylcysteine intermediate" evidence="1">
    <location>
        <position position="353"/>
    </location>
</feature>
<feature type="binding site" evidence="1">
    <location>
        <position position="110"/>
    </location>
    <ligand>
        <name>[4Fe-4S] cluster</name>
        <dbReference type="ChEBI" id="CHEBI:49883"/>
        <note>4Fe-4S-S-AdoMet</note>
    </ligand>
</feature>
<feature type="binding site" evidence="1">
    <location>
        <position position="114"/>
    </location>
    <ligand>
        <name>[4Fe-4S] cluster</name>
        <dbReference type="ChEBI" id="CHEBI:49883"/>
        <note>4Fe-4S-S-AdoMet</note>
    </ligand>
</feature>
<feature type="binding site" evidence="1">
    <location>
        <position position="117"/>
    </location>
    <ligand>
        <name>[4Fe-4S] cluster</name>
        <dbReference type="ChEBI" id="CHEBI:49883"/>
        <note>4Fe-4S-S-AdoMet</note>
    </ligand>
</feature>
<feature type="binding site" evidence="1">
    <location>
        <begin position="179"/>
        <end position="180"/>
    </location>
    <ligand>
        <name>S-adenosyl-L-methionine</name>
        <dbReference type="ChEBI" id="CHEBI:59789"/>
    </ligand>
</feature>
<feature type="binding site" evidence="1">
    <location>
        <position position="211"/>
    </location>
    <ligand>
        <name>S-adenosyl-L-methionine</name>
        <dbReference type="ChEBI" id="CHEBI:59789"/>
    </ligand>
</feature>
<feature type="binding site" evidence="1">
    <location>
        <begin position="233"/>
        <end position="235"/>
    </location>
    <ligand>
        <name>S-adenosyl-L-methionine</name>
        <dbReference type="ChEBI" id="CHEBI:59789"/>
    </ligand>
</feature>
<feature type="binding site" evidence="1">
    <location>
        <position position="310"/>
    </location>
    <ligand>
        <name>S-adenosyl-L-methionine</name>
        <dbReference type="ChEBI" id="CHEBI:59789"/>
    </ligand>
</feature>
<feature type="disulfide bond" description="(transient)" evidence="1">
    <location>
        <begin position="103"/>
        <end position="353"/>
    </location>
</feature>
<accession>Q82XV4</accession>
<comment type="function">
    <text evidence="1">Specifically methylates position 2 of adenine 2503 in 23S rRNA and position 2 of adenine 37 in tRNAs. m2A2503 modification seems to play a crucial role in the proofreading step occurring at the peptidyl transferase center and thus would serve to optimize ribosomal fidelity.</text>
</comment>
<comment type="catalytic activity">
    <reaction evidence="1">
        <text>adenosine(2503) in 23S rRNA + 2 reduced [2Fe-2S]-[ferredoxin] + 2 S-adenosyl-L-methionine = 2-methyladenosine(2503) in 23S rRNA + 5'-deoxyadenosine + L-methionine + 2 oxidized [2Fe-2S]-[ferredoxin] + S-adenosyl-L-homocysteine</text>
        <dbReference type="Rhea" id="RHEA:42916"/>
        <dbReference type="Rhea" id="RHEA-COMP:10000"/>
        <dbReference type="Rhea" id="RHEA-COMP:10001"/>
        <dbReference type="Rhea" id="RHEA-COMP:10152"/>
        <dbReference type="Rhea" id="RHEA-COMP:10282"/>
        <dbReference type="ChEBI" id="CHEBI:17319"/>
        <dbReference type="ChEBI" id="CHEBI:33737"/>
        <dbReference type="ChEBI" id="CHEBI:33738"/>
        <dbReference type="ChEBI" id="CHEBI:57844"/>
        <dbReference type="ChEBI" id="CHEBI:57856"/>
        <dbReference type="ChEBI" id="CHEBI:59789"/>
        <dbReference type="ChEBI" id="CHEBI:74411"/>
        <dbReference type="ChEBI" id="CHEBI:74497"/>
        <dbReference type="EC" id="2.1.1.192"/>
    </reaction>
</comment>
<comment type="catalytic activity">
    <reaction evidence="1">
        <text>adenosine(37) in tRNA + 2 reduced [2Fe-2S]-[ferredoxin] + 2 S-adenosyl-L-methionine = 2-methyladenosine(37) in tRNA + 5'-deoxyadenosine + L-methionine + 2 oxidized [2Fe-2S]-[ferredoxin] + S-adenosyl-L-homocysteine</text>
        <dbReference type="Rhea" id="RHEA:43332"/>
        <dbReference type="Rhea" id="RHEA-COMP:10000"/>
        <dbReference type="Rhea" id="RHEA-COMP:10001"/>
        <dbReference type="Rhea" id="RHEA-COMP:10162"/>
        <dbReference type="Rhea" id="RHEA-COMP:10485"/>
        <dbReference type="ChEBI" id="CHEBI:17319"/>
        <dbReference type="ChEBI" id="CHEBI:33737"/>
        <dbReference type="ChEBI" id="CHEBI:33738"/>
        <dbReference type="ChEBI" id="CHEBI:57844"/>
        <dbReference type="ChEBI" id="CHEBI:57856"/>
        <dbReference type="ChEBI" id="CHEBI:59789"/>
        <dbReference type="ChEBI" id="CHEBI:74411"/>
        <dbReference type="ChEBI" id="CHEBI:74497"/>
        <dbReference type="EC" id="2.1.1.192"/>
    </reaction>
</comment>
<comment type="cofactor">
    <cofactor evidence="1">
        <name>[4Fe-4S] cluster</name>
        <dbReference type="ChEBI" id="CHEBI:49883"/>
    </cofactor>
    <text evidence="1">Binds 1 [4Fe-4S] cluster. The cluster is coordinated with 3 cysteines and an exchangeable S-adenosyl-L-methionine.</text>
</comment>
<comment type="subcellular location">
    <subcellularLocation>
        <location evidence="1">Cytoplasm</location>
    </subcellularLocation>
</comment>
<comment type="miscellaneous">
    <text evidence="1">Reaction proceeds by a ping-pong mechanism involving intermediate methylation of a conserved cysteine residue.</text>
</comment>
<comment type="similarity">
    <text evidence="1">Belongs to the radical SAM superfamily. RlmN family.</text>
</comment>
<comment type="sequence caution" evidence="3">
    <conflict type="erroneous initiation">
        <sequence resource="EMBL-CDS" id="CAD84056"/>
    </conflict>
</comment>
<gene>
    <name evidence="1" type="primary">rlmN</name>
    <name type="ordered locus">NE0145</name>
</gene>
<protein>
    <recommendedName>
        <fullName evidence="1">Dual-specificity RNA methyltransferase RlmN</fullName>
        <ecNumber evidence="1">2.1.1.192</ecNumber>
    </recommendedName>
    <alternativeName>
        <fullName evidence="1">23S rRNA (adenine(2503)-C(2))-methyltransferase</fullName>
    </alternativeName>
    <alternativeName>
        <fullName evidence="1">23S rRNA m2A2503 methyltransferase</fullName>
    </alternativeName>
    <alternativeName>
        <fullName evidence="1">Ribosomal RNA large subunit methyltransferase N</fullName>
    </alternativeName>
    <alternativeName>
        <fullName evidence="1">tRNA (adenine(37)-C(2))-methyltransferase</fullName>
    </alternativeName>
    <alternativeName>
        <fullName evidence="1">tRNA m2A37 methyltransferase</fullName>
    </alternativeName>
</protein>
<organism>
    <name type="scientific">Nitrosomonas europaea (strain ATCC 19718 / CIP 103999 / KCTC 2705 / NBRC 14298)</name>
    <dbReference type="NCBI Taxonomy" id="228410"/>
    <lineage>
        <taxon>Bacteria</taxon>
        <taxon>Pseudomonadati</taxon>
        <taxon>Pseudomonadota</taxon>
        <taxon>Betaproteobacteria</taxon>
        <taxon>Nitrosomonadales</taxon>
        <taxon>Nitrosomonadaceae</taxon>
        <taxon>Nitrosomonas</taxon>
    </lineage>
</organism>
<keyword id="KW-0004">4Fe-4S</keyword>
<keyword id="KW-0963">Cytoplasm</keyword>
<keyword id="KW-1015">Disulfide bond</keyword>
<keyword id="KW-0408">Iron</keyword>
<keyword id="KW-0411">Iron-sulfur</keyword>
<keyword id="KW-0479">Metal-binding</keyword>
<keyword id="KW-0489">Methyltransferase</keyword>
<keyword id="KW-1185">Reference proteome</keyword>
<keyword id="KW-0698">rRNA processing</keyword>
<keyword id="KW-0949">S-adenosyl-L-methionine</keyword>
<keyword id="KW-0808">Transferase</keyword>
<keyword id="KW-0819">tRNA processing</keyword>